<evidence type="ECO:0000255" key="1">
    <source>
        <dbReference type="HAMAP-Rule" id="MF_00015"/>
    </source>
</evidence>
<accession>B5F1Q6</accession>
<gene>
    <name evidence="1" type="primary">lexA</name>
    <name type="ordered locus">SeAg_B4494</name>
</gene>
<feature type="chain" id="PRO_1000089590" description="LexA repressor">
    <location>
        <begin position="1"/>
        <end position="202"/>
    </location>
</feature>
<feature type="DNA-binding region" description="H-T-H motif" evidence="1">
    <location>
        <begin position="28"/>
        <end position="48"/>
    </location>
</feature>
<feature type="active site" description="For autocatalytic cleavage activity" evidence="1">
    <location>
        <position position="119"/>
    </location>
</feature>
<feature type="active site" description="For autocatalytic cleavage activity" evidence="1">
    <location>
        <position position="156"/>
    </location>
</feature>
<feature type="site" description="Cleavage; by autolysis" evidence="1">
    <location>
        <begin position="84"/>
        <end position="85"/>
    </location>
</feature>
<dbReference type="EC" id="3.4.21.88" evidence="1"/>
<dbReference type="EMBL" id="CP001138">
    <property type="protein sequence ID" value="ACH48836.1"/>
    <property type="molecule type" value="Genomic_DNA"/>
</dbReference>
<dbReference type="RefSeq" id="WP_000646079.1">
    <property type="nucleotide sequence ID" value="NC_011149.1"/>
</dbReference>
<dbReference type="SMR" id="B5F1Q6"/>
<dbReference type="MEROPS" id="S24.001"/>
<dbReference type="KEGG" id="sea:SeAg_B4494"/>
<dbReference type="HOGENOM" id="CLU_066192_45_3_6"/>
<dbReference type="Proteomes" id="UP000008819">
    <property type="component" value="Chromosome"/>
</dbReference>
<dbReference type="GO" id="GO:0003677">
    <property type="term" value="F:DNA binding"/>
    <property type="evidence" value="ECO:0007669"/>
    <property type="project" value="UniProtKB-UniRule"/>
</dbReference>
<dbReference type="GO" id="GO:0004252">
    <property type="term" value="F:serine-type endopeptidase activity"/>
    <property type="evidence" value="ECO:0007669"/>
    <property type="project" value="UniProtKB-UniRule"/>
</dbReference>
<dbReference type="GO" id="GO:0006281">
    <property type="term" value="P:DNA repair"/>
    <property type="evidence" value="ECO:0007669"/>
    <property type="project" value="UniProtKB-UniRule"/>
</dbReference>
<dbReference type="GO" id="GO:0006260">
    <property type="term" value="P:DNA replication"/>
    <property type="evidence" value="ECO:0007669"/>
    <property type="project" value="UniProtKB-UniRule"/>
</dbReference>
<dbReference type="GO" id="GO:0045892">
    <property type="term" value="P:negative regulation of DNA-templated transcription"/>
    <property type="evidence" value="ECO:0007669"/>
    <property type="project" value="UniProtKB-UniRule"/>
</dbReference>
<dbReference type="GO" id="GO:0006508">
    <property type="term" value="P:proteolysis"/>
    <property type="evidence" value="ECO:0007669"/>
    <property type="project" value="InterPro"/>
</dbReference>
<dbReference type="GO" id="GO:0009432">
    <property type="term" value="P:SOS response"/>
    <property type="evidence" value="ECO:0007669"/>
    <property type="project" value="UniProtKB-UniRule"/>
</dbReference>
<dbReference type="CDD" id="cd06529">
    <property type="entry name" value="S24_LexA-like"/>
    <property type="match status" value="1"/>
</dbReference>
<dbReference type="FunFam" id="1.10.10.10:FF:000009">
    <property type="entry name" value="LexA repressor"/>
    <property type="match status" value="1"/>
</dbReference>
<dbReference type="FunFam" id="2.10.109.10:FF:000001">
    <property type="entry name" value="LexA repressor"/>
    <property type="match status" value="1"/>
</dbReference>
<dbReference type="Gene3D" id="2.10.109.10">
    <property type="entry name" value="Umud Fragment, subunit A"/>
    <property type="match status" value="1"/>
</dbReference>
<dbReference type="Gene3D" id="1.10.10.10">
    <property type="entry name" value="Winged helix-like DNA-binding domain superfamily/Winged helix DNA-binding domain"/>
    <property type="match status" value="1"/>
</dbReference>
<dbReference type="HAMAP" id="MF_00015">
    <property type="entry name" value="LexA"/>
    <property type="match status" value="1"/>
</dbReference>
<dbReference type="InterPro" id="IPR006200">
    <property type="entry name" value="LexA"/>
</dbReference>
<dbReference type="InterPro" id="IPR039418">
    <property type="entry name" value="LexA-like"/>
</dbReference>
<dbReference type="InterPro" id="IPR036286">
    <property type="entry name" value="LexA/Signal_pep-like_sf"/>
</dbReference>
<dbReference type="InterPro" id="IPR006199">
    <property type="entry name" value="LexA_DNA-bd_dom"/>
</dbReference>
<dbReference type="InterPro" id="IPR050077">
    <property type="entry name" value="LexA_repressor"/>
</dbReference>
<dbReference type="InterPro" id="IPR006197">
    <property type="entry name" value="Peptidase_S24_LexA"/>
</dbReference>
<dbReference type="InterPro" id="IPR015927">
    <property type="entry name" value="Peptidase_S24_S26A/B/C"/>
</dbReference>
<dbReference type="InterPro" id="IPR036388">
    <property type="entry name" value="WH-like_DNA-bd_sf"/>
</dbReference>
<dbReference type="InterPro" id="IPR036390">
    <property type="entry name" value="WH_DNA-bd_sf"/>
</dbReference>
<dbReference type="NCBIfam" id="TIGR00498">
    <property type="entry name" value="lexA"/>
    <property type="match status" value="1"/>
</dbReference>
<dbReference type="PANTHER" id="PTHR33516">
    <property type="entry name" value="LEXA REPRESSOR"/>
    <property type="match status" value="1"/>
</dbReference>
<dbReference type="PANTHER" id="PTHR33516:SF2">
    <property type="entry name" value="LEXA REPRESSOR-RELATED"/>
    <property type="match status" value="1"/>
</dbReference>
<dbReference type="Pfam" id="PF01726">
    <property type="entry name" value="LexA_DNA_bind"/>
    <property type="match status" value="1"/>
</dbReference>
<dbReference type="Pfam" id="PF00717">
    <property type="entry name" value="Peptidase_S24"/>
    <property type="match status" value="1"/>
</dbReference>
<dbReference type="PRINTS" id="PR00726">
    <property type="entry name" value="LEXASERPTASE"/>
</dbReference>
<dbReference type="SUPFAM" id="SSF51306">
    <property type="entry name" value="LexA/Signal peptidase"/>
    <property type="match status" value="1"/>
</dbReference>
<dbReference type="SUPFAM" id="SSF46785">
    <property type="entry name" value="Winged helix' DNA-binding domain"/>
    <property type="match status" value="1"/>
</dbReference>
<proteinExistence type="inferred from homology"/>
<organism>
    <name type="scientific">Salmonella agona (strain SL483)</name>
    <dbReference type="NCBI Taxonomy" id="454166"/>
    <lineage>
        <taxon>Bacteria</taxon>
        <taxon>Pseudomonadati</taxon>
        <taxon>Pseudomonadota</taxon>
        <taxon>Gammaproteobacteria</taxon>
        <taxon>Enterobacterales</taxon>
        <taxon>Enterobacteriaceae</taxon>
        <taxon>Salmonella</taxon>
    </lineage>
</organism>
<comment type="function">
    <text evidence="1">Represses a number of genes involved in the response to DNA damage (SOS response), including recA and lexA. Binds to the 16 bp palindromic sequence 5'-CTGTATATATATACAG-3'. In the presence of single-stranded DNA, RecA interacts with LexA causing an autocatalytic cleavage which disrupts the DNA-binding part of LexA, leading to derepression of the SOS regulon and eventually DNA repair.</text>
</comment>
<comment type="catalytic activity">
    <reaction evidence="1">
        <text>Hydrolysis of Ala-|-Gly bond in repressor LexA.</text>
        <dbReference type="EC" id="3.4.21.88"/>
    </reaction>
</comment>
<comment type="subunit">
    <text evidence="1">Homodimer.</text>
</comment>
<comment type="similarity">
    <text evidence="1">Belongs to the peptidase S24 family.</text>
</comment>
<protein>
    <recommendedName>
        <fullName evidence="1">LexA repressor</fullName>
        <ecNumber evidence="1">3.4.21.88</ecNumber>
    </recommendedName>
</protein>
<keyword id="KW-0068">Autocatalytic cleavage</keyword>
<keyword id="KW-0227">DNA damage</keyword>
<keyword id="KW-0234">DNA repair</keyword>
<keyword id="KW-0235">DNA replication</keyword>
<keyword id="KW-0238">DNA-binding</keyword>
<keyword id="KW-0378">Hydrolase</keyword>
<keyword id="KW-0678">Repressor</keyword>
<keyword id="KW-0742">SOS response</keyword>
<keyword id="KW-0804">Transcription</keyword>
<keyword id="KW-0805">Transcription regulation</keyword>
<reference key="1">
    <citation type="journal article" date="2011" name="J. Bacteriol.">
        <title>Comparative genomics of 28 Salmonella enterica isolates: evidence for CRISPR-mediated adaptive sublineage evolution.</title>
        <authorList>
            <person name="Fricke W.F."/>
            <person name="Mammel M.K."/>
            <person name="McDermott P.F."/>
            <person name="Tartera C."/>
            <person name="White D.G."/>
            <person name="Leclerc J.E."/>
            <person name="Ravel J."/>
            <person name="Cebula T.A."/>
        </authorList>
    </citation>
    <scope>NUCLEOTIDE SEQUENCE [LARGE SCALE GENOMIC DNA]</scope>
    <source>
        <strain>SL483</strain>
    </source>
</reference>
<sequence>MKALTARQQEVFDLIRDHISQTGMPPTRAEIAQRLGFRSPNAAEEHLKALARKGVLEIVSGASRGIRLLQEEEDGLPLVGRVAAGEPLLAQQHIEGHYQVDPSLFKPSADFLLRVSGMSMKDIGIMDGDLLAVHKTQDVRNGQVVVARIDDEVTVKRLKKQGNKVELLPENSEFTPIVVDLREQSFTIEGLAVGVIRNGEWL</sequence>
<name>LEXA_SALA4</name>